<sequence>MSDPCWEQCVSCLQNELPSQQFNTWIRPLRVEESSTLLLRLIAPNRFVQDWVNDKYRTRIEEIISNSDAGPKSLEIAVAQRARAGFEVVRNAKVAPAVPVPDPLPSTGRDESSFQPPKGNTSADYSGHSDLGFQSPHRRQSPFSESQERFTQPLEMSRFGSGRPSNERSNEGAIGGSTESSADRERIPLQGVVEDLFKPTKNSNDFVEPRSTDPLLEIESRPIIETVSPRDIQDFGSQLTSRVKKKDVEGGIQHKHNLNTTFIFDNFVVGKSNQLGLAAASQVAENPGGAYNPLFIYGGVGLGKTHLMHAVGNALVQRKPGARVVYLHSERFVADMVKALQLNAISDFKRFYRSVDALLIDDIQFFAGKERSQEEFFHTFNALLEGGQQIILTCDKYPKEINGLEERLKSRFGWGLTVAIEPPELETRVAILKRKAESSRMPLPDDAAFFIAQRIRSNVRELEGALKRVIANAQFTQRSISVELVREALKDLLALQDRLVSIDNIQRVVAEYYKIKVSDLHSKRRSRSVARPRQVAMYLAKDLTHHSLPEIGDAFGGRDHTTVLHACRKIRDLQESDADIREDVKNLLRTLTT</sequence>
<feature type="chain" id="PRO_1000205664" description="Chromosomal replication initiator protein DnaA">
    <location>
        <begin position="1"/>
        <end position="593"/>
    </location>
</feature>
<feature type="region of interest" description="Domain I, interacts with DnaA modulators" evidence="1">
    <location>
        <begin position="1"/>
        <end position="71"/>
    </location>
</feature>
<feature type="region of interest" description="Domain II" evidence="1">
    <location>
        <begin position="71"/>
        <end position="256"/>
    </location>
</feature>
<feature type="region of interest" description="Disordered" evidence="2">
    <location>
        <begin position="97"/>
        <end position="186"/>
    </location>
</feature>
<feature type="region of interest" description="Domain III, AAA+ region" evidence="1">
    <location>
        <begin position="257"/>
        <end position="473"/>
    </location>
</feature>
<feature type="region of interest" description="Domain IV, binds dsDNA" evidence="1">
    <location>
        <begin position="474"/>
        <end position="593"/>
    </location>
</feature>
<feature type="compositionally biased region" description="Polar residues" evidence="2">
    <location>
        <begin position="113"/>
        <end position="124"/>
    </location>
</feature>
<feature type="binding site" evidence="1">
    <location>
        <position position="301"/>
    </location>
    <ligand>
        <name>ATP</name>
        <dbReference type="ChEBI" id="CHEBI:30616"/>
    </ligand>
</feature>
<feature type="binding site" evidence="1">
    <location>
        <position position="303"/>
    </location>
    <ligand>
        <name>ATP</name>
        <dbReference type="ChEBI" id="CHEBI:30616"/>
    </ligand>
</feature>
<feature type="binding site" evidence="1">
    <location>
        <position position="304"/>
    </location>
    <ligand>
        <name>ATP</name>
        <dbReference type="ChEBI" id="CHEBI:30616"/>
    </ligand>
</feature>
<feature type="binding site" evidence="1">
    <location>
        <position position="305"/>
    </location>
    <ligand>
        <name>ATP</name>
        <dbReference type="ChEBI" id="CHEBI:30616"/>
    </ligand>
</feature>
<name>DNAA_TERTT</name>
<gene>
    <name evidence="1" type="primary">dnaA</name>
    <name type="ordered locus">TERTU_0002</name>
</gene>
<dbReference type="EMBL" id="CP001614">
    <property type="protein sequence ID" value="ACR12930.1"/>
    <property type="molecule type" value="Genomic_DNA"/>
</dbReference>
<dbReference type="RefSeq" id="WP_015819043.1">
    <property type="nucleotide sequence ID" value="NC_012997.1"/>
</dbReference>
<dbReference type="SMR" id="C5BKL9"/>
<dbReference type="STRING" id="377629.TERTU_0002"/>
<dbReference type="KEGG" id="ttu:TERTU_0002"/>
<dbReference type="eggNOG" id="COG0593">
    <property type="taxonomic scope" value="Bacteria"/>
</dbReference>
<dbReference type="HOGENOM" id="CLU_026910_0_0_6"/>
<dbReference type="OrthoDB" id="9807019at2"/>
<dbReference type="Proteomes" id="UP000009080">
    <property type="component" value="Chromosome"/>
</dbReference>
<dbReference type="GO" id="GO:0005737">
    <property type="term" value="C:cytoplasm"/>
    <property type="evidence" value="ECO:0007669"/>
    <property type="project" value="UniProtKB-SubCell"/>
</dbReference>
<dbReference type="GO" id="GO:0005886">
    <property type="term" value="C:plasma membrane"/>
    <property type="evidence" value="ECO:0007669"/>
    <property type="project" value="TreeGrafter"/>
</dbReference>
<dbReference type="GO" id="GO:0005524">
    <property type="term" value="F:ATP binding"/>
    <property type="evidence" value="ECO:0007669"/>
    <property type="project" value="UniProtKB-UniRule"/>
</dbReference>
<dbReference type="GO" id="GO:0016887">
    <property type="term" value="F:ATP hydrolysis activity"/>
    <property type="evidence" value="ECO:0007669"/>
    <property type="project" value="InterPro"/>
</dbReference>
<dbReference type="GO" id="GO:0003688">
    <property type="term" value="F:DNA replication origin binding"/>
    <property type="evidence" value="ECO:0007669"/>
    <property type="project" value="UniProtKB-UniRule"/>
</dbReference>
<dbReference type="GO" id="GO:0008289">
    <property type="term" value="F:lipid binding"/>
    <property type="evidence" value="ECO:0007669"/>
    <property type="project" value="UniProtKB-KW"/>
</dbReference>
<dbReference type="GO" id="GO:0006270">
    <property type="term" value="P:DNA replication initiation"/>
    <property type="evidence" value="ECO:0007669"/>
    <property type="project" value="UniProtKB-UniRule"/>
</dbReference>
<dbReference type="GO" id="GO:0006275">
    <property type="term" value="P:regulation of DNA replication"/>
    <property type="evidence" value="ECO:0007669"/>
    <property type="project" value="UniProtKB-UniRule"/>
</dbReference>
<dbReference type="CDD" id="cd00009">
    <property type="entry name" value="AAA"/>
    <property type="match status" value="1"/>
</dbReference>
<dbReference type="CDD" id="cd06571">
    <property type="entry name" value="Bac_DnaA_C"/>
    <property type="match status" value="1"/>
</dbReference>
<dbReference type="FunFam" id="1.10.1750.10:FF:000001">
    <property type="entry name" value="Chromosomal replication initiator protein DnaA"/>
    <property type="match status" value="1"/>
</dbReference>
<dbReference type="FunFam" id="1.10.8.60:FF:000003">
    <property type="entry name" value="Chromosomal replication initiator protein DnaA"/>
    <property type="match status" value="1"/>
</dbReference>
<dbReference type="FunFam" id="3.40.50.300:FF:000103">
    <property type="entry name" value="Chromosomal replication initiator protein DnaA"/>
    <property type="match status" value="1"/>
</dbReference>
<dbReference type="Gene3D" id="1.10.1750.10">
    <property type="match status" value="1"/>
</dbReference>
<dbReference type="Gene3D" id="1.10.8.60">
    <property type="match status" value="1"/>
</dbReference>
<dbReference type="Gene3D" id="3.30.300.180">
    <property type="match status" value="1"/>
</dbReference>
<dbReference type="Gene3D" id="3.40.50.300">
    <property type="entry name" value="P-loop containing nucleotide triphosphate hydrolases"/>
    <property type="match status" value="1"/>
</dbReference>
<dbReference type="HAMAP" id="MF_00377">
    <property type="entry name" value="DnaA_bact"/>
    <property type="match status" value="1"/>
</dbReference>
<dbReference type="InterPro" id="IPR003593">
    <property type="entry name" value="AAA+_ATPase"/>
</dbReference>
<dbReference type="InterPro" id="IPR001957">
    <property type="entry name" value="Chromosome_initiator_DnaA"/>
</dbReference>
<dbReference type="InterPro" id="IPR020591">
    <property type="entry name" value="Chromosome_initiator_DnaA-like"/>
</dbReference>
<dbReference type="InterPro" id="IPR018312">
    <property type="entry name" value="Chromosome_initiator_DnaA_CS"/>
</dbReference>
<dbReference type="InterPro" id="IPR013159">
    <property type="entry name" value="DnaA_C"/>
</dbReference>
<dbReference type="InterPro" id="IPR013317">
    <property type="entry name" value="DnaA_dom"/>
</dbReference>
<dbReference type="InterPro" id="IPR024633">
    <property type="entry name" value="DnaA_N_dom"/>
</dbReference>
<dbReference type="InterPro" id="IPR038454">
    <property type="entry name" value="DnaA_N_sf"/>
</dbReference>
<dbReference type="InterPro" id="IPR027417">
    <property type="entry name" value="P-loop_NTPase"/>
</dbReference>
<dbReference type="InterPro" id="IPR010921">
    <property type="entry name" value="Trp_repressor/repl_initiator"/>
</dbReference>
<dbReference type="NCBIfam" id="TIGR00362">
    <property type="entry name" value="DnaA"/>
    <property type="match status" value="1"/>
</dbReference>
<dbReference type="PANTHER" id="PTHR30050">
    <property type="entry name" value="CHROMOSOMAL REPLICATION INITIATOR PROTEIN DNAA"/>
    <property type="match status" value="1"/>
</dbReference>
<dbReference type="PANTHER" id="PTHR30050:SF2">
    <property type="entry name" value="CHROMOSOMAL REPLICATION INITIATOR PROTEIN DNAA"/>
    <property type="match status" value="1"/>
</dbReference>
<dbReference type="Pfam" id="PF00308">
    <property type="entry name" value="Bac_DnaA"/>
    <property type="match status" value="1"/>
</dbReference>
<dbReference type="Pfam" id="PF08299">
    <property type="entry name" value="Bac_DnaA_C"/>
    <property type="match status" value="1"/>
</dbReference>
<dbReference type="Pfam" id="PF11638">
    <property type="entry name" value="DnaA_N"/>
    <property type="match status" value="1"/>
</dbReference>
<dbReference type="PRINTS" id="PR00051">
    <property type="entry name" value="DNAA"/>
</dbReference>
<dbReference type="SMART" id="SM00382">
    <property type="entry name" value="AAA"/>
    <property type="match status" value="1"/>
</dbReference>
<dbReference type="SMART" id="SM00760">
    <property type="entry name" value="Bac_DnaA_C"/>
    <property type="match status" value="1"/>
</dbReference>
<dbReference type="SUPFAM" id="SSF52540">
    <property type="entry name" value="P-loop containing nucleoside triphosphate hydrolases"/>
    <property type="match status" value="1"/>
</dbReference>
<dbReference type="SUPFAM" id="SSF48295">
    <property type="entry name" value="TrpR-like"/>
    <property type="match status" value="1"/>
</dbReference>
<dbReference type="PROSITE" id="PS01008">
    <property type="entry name" value="DNAA"/>
    <property type="match status" value="1"/>
</dbReference>
<comment type="function">
    <text evidence="1">Plays an essential role in the initiation and regulation of chromosomal replication. ATP-DnaA binds to the origin of replication (oriC) to initiate formation of the DNA replication initiation complex once per cell cycle. Binds the DnaA box (a 9 base pair repeat at the origin) and separates the double-stranded (ds)DNA. Forms a right-handed helical filament on oriC DNA; dsDNA binds to the exterior of the filament while single-stranded (ss)DNA is stabiized in the filament's interior. The ATP-DnaA-oriC complex binds and stabilizes one strand of the AT-rich DNA unwinding element (DUE), permitting loading of DNA polymerase. After initiation quickly degrades to an ADP-DnaA complex that is not apt for DNA replication. Binds acidic phospholipids.</text>
</comment>
<comment type="subunit">
    <text evidence="1">Oligomerizes as a right-handed, spiral filament on DNA at oriC.</text>
</comment>
<comment type="subcellular location">
    <subcellularLocation>
        <location evidence="1">Cytoplasm</location>
    </subcellularLocation>
</comment>
<comment type="domain">
    <text evidence="1">Domain I is involved in oligomerization and binding regulators, domain II is flexibile and of varying length in different bacteria, domain III forms the AAA+ region, while domain IV binds dsDNA.</text>
</comment>
<comment type="similarity">
    <text evidence="1">Belongs to the DnaA family.</text>
</comment>
<protein>
    <recommendedName>
        <fullName evidence="1">Chromosomal replication initiator protein DnaA</fullName>
    </recommendedName>
</protein>
<accession>C5BKL9</accession>
<proteinExistence type="inferred from homology"/>
<reference key="1">
    <citation type="journal article" date="2009" name="PLoS ONE">
        <title>The complete genome of Teredinibacter turnerae T7901: an intracellular endosymbiont of marine wood-boring bivalves (shipworms).</title>
        <authorList>
            <person name="Yang J.C."/>
            <person name="Madupu R."/>
            <person name="Durkin A.S."/>
            <person name="Ekborg N.A."/>
            <person name="Pedamallu C.S."/>
            <person name="Hostetler J.B."/>
            <person name="Radune D."/>
            <person name="Toms B.S."/>
            <person name="Henrissat B."/>
            <person name="Coutinho P.M."/>
            <person name="Schwarz S."/>
            <person name="Field L."/>
            <person name="Trindade-Silva A.E."/>
            <person name="Soares C.A.G."/>
            <person name="Elshahawi S."/>
            <person name="Hanora A."/>
            <person name="Schmidt E.W."/>
            <person name="Haygood M.G."/>
            <person name="Posfai J."/>
            <person name="Benner J."/>
            <person name="Madinger C."/>
            <person name="Nove J."/>
            <person name="Anton B."/>
            <person name="Chaudhary K."/>
            <person name="Foster J."/>
            <person name="Holman A."/>
            <person name="Kumar S."/>
            <person name="Lessard P.A."/>
            <person name="Luyten Y.A."/>
            <person name="Slatko B."/>
            <person name="Wood N."/>
            <person name="Wu B."/>
            <person name="Teplitski M."/>
            <person name="Mougous J.D."/>
            <person name="Ward N."/>
            <person name="Eisen J.A."/>
            <person name="Badger J.H."/>
            <person name="Distel D.L."/>
        </authorList>
    </citation>
    <scope>NUCLEOTIDE SEQUENCE [LARGE SCALE GENOMIC DNA]</scope>
    <source>
        <strain>ATCC 39867 / T7901</strain>
    </source>
</reference>
<organism>
    <name type="scientific">Teredinibacter turnerae (strain ATCC 39867 / T7901)</name>
    <dbReference type="NCBI Taxonomy" id="377629"/>
    <lineage>
        <taxon>Bacteria</taxon>
        <taxon>Pseudomonadati</taxon>
        <taxon>Pseudomonadota</taxon>
        <taxon>Gammaproteobacteria</taxon>
        <taxon>Cellvibrionales</taxon>
        <taxon>Cellvibrionaceae</taxon>
        <taxon>Teredinibacter</taxon>
    </lineage>
</organism>
<evidence type="ECO:0000255" key="1">
    <source>
        <dbReference type="HAMAP-Rule" id="MF_00377"/>
    </source>
</evidence>
<evidence type="ECO:0000256" key="2">
    <source>
        <dbReference type="SAM" id="MobiDB-lite"/>
    </source>
</evidence>
<keyword id="KW-0067">ATP-binding</keyword>
<keyword id="KW-0963">Cytoplasm</keyword>
<keyword id="KW-0235">DNA replication</keyword>
<keyword id="KW-0238">DNA-binding</keyword>
<keyword id="KW-0446">Lipid-binding</keyword>
<keyword id="KW-0547">Nucleotide-binding</keyword>
<keyword id="KW-1185">Reference proteome</keyword>